<sequence>METHPSLAVKWSCPDLTIYAGEVTIGEEDRNKMDSKKRKLEKTRITEAACALLNSGGGLIAMQMTNKSEHPVEMGQDLEKSLRELIMSPNMQAFFETKQQEDQFYIFVKSWSCRPEDGSTKPRICSLGSSLYCRSITSKVAMDSREAFEFLKDKKACIKYRPTDDGAPPAKIPRAMCQNSLESNPAFEIFQSKKLEYGQCLLFSESTSIEFKQFSTKHVQAYMKNIIPEYISAFANTQGGYLFIGVDDKRIILGCPKDNVDRDSLKTVANETISKVPVFHFCSSKDKDKVSYETRVIDVFQEGNLYGYLCVIKVEPFCCAVFSEAPISWMVDKEKGVYRLNTEEWVRMMVDFGPEASSKDLSKDFECQLSLCNSPPHCRPVYSKKGLQHKVDLQQRLFQVSPDCLKYTPESLWKELCSQHKRLKGLVKQQIRSFSCGLLILYRSWAVDLNLKEKQEVICDALLIAQNSPPILYTILGEQDEQGQDYCNHTAFTLKQKLVNTGGYTGRVCVMTKVLCLSSQNNIETNGGSVSPINYPSSYNLANIQEMQDLLQALVIVLLNFRSFLSDQLGCEILNLLTAQQYEILSKSLRKTRELFVHGLPGSGKTIIAMKIMEKIRNTFHCETDSILYICENQPLRDFIRAKRICQAVTRKTFMNYRFKTNSFQHIIVDEAQNFRTEDGNWYGKAKAISRRVKSCPGMFWIFLDYFQTSHLKESGLPDFSRQYPREELTQVVRNGDKIAEFLQKELQKIRDNPPCSIPRQSLNIVHEFKWSQSVSGNIKTEQFTLEDMVIYVADKCYDFLRKGYSLQDIAVLFSTDKEKKTYESMFLGEMRKRRRASEMNHAYLCDSNMFDSIRRFSGLERSIVFGINPIATEQPISHNLLLCLASRAMKHLYILYFSTPEGHSSTEAC</sequence>
<feature type="chain" id="PRO_0000444607" description="Schlafen family member 8">
    <location>
        <begin position="1"/>
        <end position="910"/>
    </location>
</feature>
<feature type="region of interest" description="N'-domain region" evidence="1">
    <location>
        <begin position="1"/>
        <end position="354"/>
    </location>
</feature>
<feature type="active site" evidence="1">
    <location>
        <position position="205"/>
    </location>
</feature>
<feature type="active site" evidence="1">
    <location>
        <position position="210"/>
    </location>
</feature>
<feature type="binding site" evidence="1">
    <location>
        <position position="280"/>
    </location>
    <ligand>
        <name>Zn(2+)</name>
        <dbReference type="ChEBI" id="CHEBI:29105"/>
    </ligand>
</feature>
<feature type="binding site" evidence="1">
    <location>
        <position position="282"/>
    </location>
    <ligand>
        <name>Zn(2+)</name>
        <dbReference type="ChEBI" id="CHEBI:29105"/>
    </ligand>
</feature>
<feature type="binding site" evidence="1">
    <location>
        <position position="319"/>
    </location>
    <ligand>
        <name>Zn(2+)</name>
        <dbReference type="ChEBI" id="CHEBI:29105"/>
    </ligand>
</feature>
<feature type="binding site" evidence="3">
    <location>
        <begin position="599"/>
        <end position="606"/>
    </location>
    <ligand>
        <name>ATP</name>
        <dbReference type="ChEBI" id="CHEBI:30616"/>
    </ligand>
</feature>
<feature type="sequence conflict" description="In Ref. 3; BAE29925." evidence="9" ref="3">
    <original>Q</original>
    <variation>R</variation>
    <location>
        <position position="191"/>
    </location>
</feature>
<feature type="sequence conflict" description="In Ref. 1; AAP30068." evidence="9" ref="1">
    <original>S</original>
    <variation>P</variation>
    <location>
        <position position="899"/>
    </location>
</feature>
<organism>
    <name type="scientific">Mus musculus</name>
    <name type="common">Mouse</name>
    <dbReference type="NCBI Taxonomy" id="10090"/>
    <lineage>
        <taxon>Eukaryota</taxon>
        <taxon>Metazoa</taxon>
        <taxon>Chordata</taxon>
        <taxon>Craniata</taxon>
        <taxon>Vertebrata</taxon>
        <taxon>Euteleostomi</taxon>
        <taxon>Mammalia</taxon>
        <taxon>Eutheria</taxon>
        <taxon>Euarchontoglires</taxon>
        <taxon>Glires</taxon>
        <taxon>Rodentia</taxon>
        <taxon>Myomorpha</taxon>
        <taxon>Muroidea</taxon>
        <taxon>Muridae</taxon>
        <taxon>Murinae</taxon>
        <taxon>Mus</taxon>
        <taxon>Mus</taxon>
    </lineage>
</organism>
<reference key="1">
    <citation type="journal article" date="2004" name="Int. Immunol.">
        <title>Modulation of T cell development and activation by novel members of the Schlafen (slfn) gene family harbouring an RNA helicase-like motif.</title>
        <authorList>
            <person name="Geserick P."/>
            <person name="Kaiser F."/>
            <person name="Klemm U."/>
            <person name="Kaufmann S.H.E."/>
            <person name="Zerrahn J."/>
        </authorList>
    </citation>
    <scope>NUCLEOTIDE SEQUENCE [MRNA]</scope>
    <scope>TISSUE SPECIFICITY</scope>
    <scope>INDUCTION</scope>
    <source>
        <strain>129/SvJ</strain>
        <strain>C57BL/6J</strain>
    </source>
</reference>
<reference key="2">
    <citation type="journal article" date="2009" name="PLoS Biol.">
        <title>Lineage-specific biology revealed by a finished genome assembly of the mouse.</title>
        <authorList>
            <person name="Church D.M."/>
            <person name="Goodstadt L."/>
            <person name="Hillier L.W."/>
            <person name="Zody M.C."/>
            <person name="Goldstein S."/>
            <person name="She X."/>
            <person name="Bult C.J."/>
            <person name="Agarwala R."/>
            <person name="Cherry J.L."/>
            <person name="DiCuccio M."/>
            <person name="Hlavina W."/>
            <person name="Kapustin Y."/>
            <person name="Meric P."/>
            <person name="Maglott D."/>
            <person name="Birtle Z."/>
            <person name="Marques A.C."/>
            <person name="Graves T."/>
            <person name="Zhou S."/>
            <person name="Teague B."/>
            <person name="Potamousis K."/>
            <person name="Churas C."/>
            <person name="Place M."/>
            <person name="Herschleb J."/>
            <person name="Runnheim R."/>
            <person name="Forrest D."/>
            <person name="Amos-Landgraf J."/>
            <person name="Schwartz D.C."/>
            <person name="Cheng Z."/>
            <person name="Lindblad-Toh K."/>
            <person name="Eichler E.E."/>
            <person name="Ponting C.P."/>
        </authorList>
    </citation>
    <scope>NUCLEOTIDE SEQUENCE [LARGE SCALE GENOMIC DNA]</scope>
    <source>
        <strain>C57BL/6J</strain>
    </source>
</reference>
<reference key="3">
    <citation type="journal article" date="2005" name="Science">
        <title>The transcriptional landscape of the mammalian genome.</title>
        <authorList>
            <person name="Carninci P."/>
            <person name="Kasukawa T."/>
            <person name="Katayama S."/>
            <person name="Gough J."/>
            <person name="Frith M.C."/>
            <person name="Maeda N."/>
            <person name="Oyama R."/>
            <person name="Ravasi T."/>
            <person name="Lenhard B."/>
            <person name="Wells C."/>
            <person name="Kodzius R."/>
            <person name="Shimokawa K."/>
            <person name="Bajic V.B."/>
            <person name="Brenner S.E."/>
            <person name="Batalov S."/>
            <person name="Forrest A.R."/>
            <person name="Zavolan M."/>
            <person name="Davis M.J."/>
            <person name="Wilming L.G."/>
            <person name="Aidinis V."/>
            <person name="Allen J.E."/>
            <person name="Ambesi-Impiombato A."/>
            <person name="Apweiler R."/>
            <person name="Aturaliya R.N."/>
            <person name="Bailey T.L."/>
            <person name="Bansal M."/>
            <person name="Baxter L."/>
            <person name="Beisel K.W."/>
            <person name="Bersano T."/>
            <person name="Bono H."/>
            <person name="Chalk A.M."/>
            <person name="Chiu K.P."/>
            <person name="Choudhary V."/>
            <person name="Christoffels A."/>
            <person name="Clutterbuck D.R."/>
            <person name="Crowe M.L."/>
            <person name="Dalla E."/>
            <person name="Dalrymple B.P."/>
            <person name="de Bono B."/>
            <person name="Della Gatta G."/>
            <person name="di Bernardo D."/>
            <person name="Down T."/>
            <person name="Engstrom P."/>
            <person name="Fagiolini M."/>
            <person name="Faulkner G."/>
            <person name="Fletcher C.F."/>
            <person name="Fukushima T."/>
            <person name="Furuno M."/>
            <person name="Futaki S."/>
            <person name="Gariboldi M."/>
            <person name="Georgii-Hemming P."/>
            <person name="Gingeras T.R."/>
            <person name="Gojobori T."/>
            <person name="Green R.E."/>
            <person name="Gustincich S."/>
            <person name="Harbers M."/>
            <person name="Hayashi Y."/>
            <person name="Hensch T.K."/>
            <person name="Hirokawa N."/>
            <person name="Hill D."/>
            <person name="Huminiecki L."/>
            <person name="Iacono M."/>
            <person name="Ikeo K."/>
            <person name="Iwama A."/>
            <person name="Ishikawa T."/>
            <person name="Jakt M."/>
            <person name="Kanapin A."/>
            <person name="Katoh M."/>
            <person name="Kawasawa Y."/>
            <person name="Kelso J."/>
            <person name="Kitamura H."/>
            <person name="Kitano H."/>
            <person name="Kollias G."/>
            <person name="Krishnan S.P."/>
            <person name="Kruger A."/>
            <person name="Kummerfeld S.K."/>
            <person name="Kurochkin I.V."/>
            <person name="Lareau L.F."/>
            <person name="Lazarevic D."/>
            <person name="Lipovich L."/>
            <person name="Liu J."/>
            <person name="Liuni S."/>
            <person name="McWilliam S."/>
            <person name="Madan Babu M."/>
            <person name="Madera M."/>
            <person name="Marchionni L."/>
            <person name="Matsuda H."/>
            <person name="Matsuzawa S."/>
            <person name="Miki H."/>
            <person name="Mignone F."/>
            <person name="Miyake S."/>
            <person name="Morris K."/>
            <person name="Mottagui-Tabar S."/>
            <person name="Mulder N."/>
            <person name="Nakano N."/>
            <person name="Nakauchi H."/>
            <person name="Ng P."/>
            <person name="Nilsson R."/>
            <person name="Nishiguchi S."/>
            <person name="Nishikawa S."/>
            <person name="Nori F."/>
            <person name="Ohara O."/>
            <person name="Okazaki Y."/>
            <person name="Orlando V."/>
            <person name="Pang K.C."/>
            <person name="Pavan W.J."/>
            <person name="Pavesi G."/>
            <person name="Pesole G."/>
            <person name="Petrovsky N."/>
            <person name="Piazza S."/>
            <person name="Reed J."/>
            <person name="Reid J.F."/>
            <person name="Ring B.Z."/>
            <person name="Ringwald M."/>
            <person name="Rost B."/>
            <person name="Ruan Y."/>
            <person name="Salzberg S.L."/>
            <person name="Sandelin A."/>
            <person name="Schneider C."/>
            <person name="Schoenbach C."/>
            <person name="Sekiguchi K."/>
            <person name="Semple C.A."/>
            <person name="Seno S."/>
            <person name="Sessa L."/>
            <person name="Sheng Y."/>
            <person name="Shibata Y."/>
            <person name="Shimada H."/>
            <person name="Shimada K."/>
            <person name="Silva D."/>
            <person name="Sinclair B."/>
            <person name="Sperling S."/>
            <person name="Stupka E."/>
            <person name="Sugiura K."/>
            <person name="Sultana R."/>
            <person name="Takenaka Y."/>
            <person name="Taki K."/>
            <person name="Tammoja K."/>
            <person name="Tan S.L."/>
            <person name="Tang S."/>
            <person name="Taylor M.S."/>
            <person name="Tegner J."/>
            <person name="Teichmann S.A."/>
            <person name="Ueda H.R."/>
            <person name="van Nimwegen E."/>
            <person name="Verardo R."/>
            <person name="Wei C.L."/>
            <person name="Yagi K."/>
            <person name="Yamanishi H."/>
            <person name="Zabarovsky E."/>
            <person name="Zhu S."/>
            <person name="Zimmer A."/>
            <person name="Hide W."/>
            <person name="Bult C."/>
            <person name="Grimmond S.M."/>
            <person name="Teasdale R.D."/>
            <person name="Liu E.T."/>
            <person name="Brusic V."/>
            <person name="Quackenbush J."/>
            <person name="Wahlestedt C."/>
            <person name="Mattick J.S."/>
            <person name="Hume D.A."/>
            <person name="Kai C."/>
            <person name="Sasaki D."/>
            <person name="Tomaru Y."/>
            <person name="Fukuda S."/>
            <person name="Kanamori-Katayama M."/>
            <person name="Suzuki M."/>
            <person name="Aoki J."/>
            <person name="Arakawa T."/>
            <person name="Iida J."/>
            <person name="Imamura K."/>
            <person name="Itoh M."/>
            <person name="Kato T."/>
            <person name="Kawaji H."/>
            <person name="Kawagashira N."/>
            <person name="Kawashima T."/>
            <person name="Kojima M."/>
            <person name="Kondo S."/>
            <person name="Konno H."/>
            <person name="Nakano K."/>
            <person name="Ninomiya N."/>
            <person name="Nishio T."/>
            <person name="Okada M."/>
            <person name="Plessy C."/>
            <person name="Shibata K."/>
            <person name="Shiraki T."/>
            <person name="Suzuki S."/>
            <person name="Tagami M."/>
            <person name="Waki K."/>
            <person name="Watahiki A."/>
            <person name="Okamura-Oho Y."/>
            <person name="Suzuki H."/>
            <person name="Kawai J."/>
            <person name="Hayashizaki Y."/>
        </authorList>
    </citation>
    <scope>NUCLEOTIDE SEQUENCE [LARGE SCALE MRNA] OF 108-910</scope>
    <source>
        <strain>C57BL/6J</strain>
        <tissue>Bone marrow</tissue>
    </source>
</reference>
<reference key="4">
    <citation type="journal article" date="2018" name="Int. Immunol.">
        <title>Schlafen-8 is essential for lymphatic endothelial cell activation in experimental autoimmune encephalomyelitis.</title>
        <authorList>
            <person name="Nakagawa K."/>
            <person name="Matsuki T."/>
            <person name="Zhao L."/>
            <person name="Kuniyoshi K."/>
            <person name="Tanaka H."/>
            <person name="Ebina I."/>
            <person name="Yoshida K.J."/>
            <person name="Nabeshima H."/>
            <person name="Fukushima K."/>
            <person name="Kanemaru H."/>
            <person name="Yamane F."/>
            <person name="Kawasaki T."/>
            <person name="Machida T."/>
            <person name="Naito H."/>
            <person name="Takakura N."/>
            <person name="Satoh T."/>
            <person name="Akira S."/>
        </authorList>
    </citation>
    <scope>FUNCTION</scope>
    <scope>DISRUPTION PHENOTYPE</scope>
</reference>
<reference key="5">
    <citation type="journal article" date="2018" name="Nat. Commun.">
        <title>Structure of Schlafen13 reveals a new class of tRNA/rRNA- targeting RNase engaged in translational control.</title>
        <authorList>
            <person name="Yang J.Y."/>
            <person name="Deng X.Y."/>
            <person name="Li Y.S."/>
            <person name="Ma X.C."/>
            <person name="Feng J.X."/>
            <person name="Yu B."/>
            <person name="Chen Y."/>
            <person name="Luo Y.L."/>
            <person name="Wang X."/>
            <person name="Chen M.L."/>
            <person name="Fang Z.X."/>
            <person name="Zheng F.X."/>
            <person name="Li Y.P."/>
            <person name="Zhong Q."/>
            <person name="Kang T.B."/>
            <person name="Song L.B."/>
            <person name="Xu R.H."/>
            <person name="Zeng M.S."/>
            <person name="Chen W."/>
            <person name="Zhang H."/>
            <person name="Xie W."/>
            <person name="Gao S."/>
        </authorList>
    </citation>
    <scope>FUNCTION</scope>
</reference>
<dbReference type="EC" id="3.1.-.-" evidence="6"/>
<dbReference type="EMBL" id="AY261798">
    <property type="protein sequence ID" value="AAP30068.1"/>
    <property type="molecule type" value="mRNA"/>
</dbReference>
<dbReference type="EMBL" id="AL603745">
    <property type="status" value="NOT_ANNOTATED_CDS"/>
    <property type="molecule type" value="Genomic_DNA"/>
</dbReference>
<dbReference type="EMBL" id="AK150875">
    <property type="protein sequence ID" value="BAE29925.1"/>
    <property type="molecule type" value="mRNA"/>
</dbReference>
<dbReference type="CCDS" id="CCDS25155.1"/>
<dbReference type="RefSeq" id="NP_853523.2">
    <property type="nucleotide sequence ID" value="NM_181545.4"/>
</dbReference>
<dbReference type="RefSeq" id="XP_006533547.1">
    <property type="nucleotide sequence ID" value="XM_006533484.3"/>
</dbReference>
<dbReference type="RefSeq" id="XP_036012637.1">
    <property type="nucleotide sequence ID" value="XM_036156744.1"/>
</dbReference>
<dbReference type="SMR" id="B1ARD8"/>
<dbReference type="FunCoup" id="B1ARD8">
    <property type="interactions" value="724"/>
</dbReference>
<dbReference type="STRING" id="10090.ENSMUSP00000040060"/>
<dbReference type="iPTMnet" id="B1ARD8"/>
<dbReference type="PhosphoSitePlus" id="B1ARD8"/>
<dbReference type="PaxDb" id="10090-ENSMUSP00000040060"/>
<dbReference type="PeptideAtlas" id="B1ARD8"/>
<dbReference type="ProteomicsDB" id="340832"/>
<dbReference type="ProteomicsDB" id="352912"/>
<dbReference type="ProteomicsDB" id="371565"/>
<dbReference type="DNASU" id="276950"/>
<dbReference type="Ensembl" id="ENSMUST00000038141.15">
    <property type="protein sequence ID" value="ENSMUSP00000040060.9"/>
    <property type="gene ID" value="ENSMUSG00000035208.17"/>
</dbReference>
<dbReference type="Ensembl" id="ENSMUST00000092838.11">
    <property type="protein sequence ID" value="ENSMUSP00000090513.5"/>
    <property type="gene ID" value="ENSMUSG00000035208.17"/>
</dbReference>
<dbReference type="GeneID" id="276950"/>
<dbReference type="KEGG" id="mmu:276950"/>
<dbReference type="UCSC" id="uc007kod.2">
    <property type="organism name" value="mouse"/>
</dbReference>
<dbReference type="AGR" id="MGI:2672859"/>
<dbReference type="CTD" id="276950"/>
<dbReference type="MGI" id="MGI:2672859">
    <property type="gene designation" value="Slfn8"/>
</dbReference>
<dbReference type="VEuPathDB" id="HostDB:ENSMUSG00000035208"/>
<dbReference type="eggNOG" id="ENOG502QWKG">
    <property type="taxonomic scope" value="Eukaryota"/>
</dbReference>
<dbReference type="GeneTree" id="ENSGT00410000025651"/>
<dbReference type="HOGENOM" id="CLU_034558_0_0_1"/>
<dbReference type="InParanoid" id="B1ARD8"/>
<dbReference type="OMA" id="HKLCVIP"/>
<dbReference type="OrthoDB" id="6052143at2759"/>
<dbReference type="PhylomeDB" id="B1ARD8"/>
<dbReference type="TreeFam" id="TF337168"/>
<dbReference type="BioGRID-ORCS" id="276950">
    <property type="hits" value="2 hits in 74 CRISPR screens"/>
</dbReference>
<dbReference type="PRO" id="PR:B1ARD8"/>
<dbReference type="Proteomes" id="UP000000589">
    <property type="component" value="Chromosome 11"/>
</dbReference>
<dbReference type="RNAct" id="B1ARD8">
    <property type="molecule type" value="protein"/>
</dbReference>
<dbReference type="Bgee" id="ENSMUSG00000035208">
    <property type="expression patterns" value="Expressed in spleen and 47 other cell types or tissues"/>
</dbReference>
<dbReference type="ExpressionAtlas" id="B1ARD8">
    <property type="expression patterns" value="baseline and differential"/>
</dbReference>
<dbReference type="GO" id="GO:0005737">
    <property type="term" value="C:cytoplasm"/>
    <property type="evidence" value="ECO:0000250"/>
    <property type="project" value="UniProtKB"/>
</dbReference>
<dbReference type="GO" id="GO:0005524">
    <property type="term" value="F:ATP binding"/>
    <property type="evidence" value="ECO:0007669"/>
    <property type="project" value="UniProtKB-KW"/>
</dbReference>
<dbReference type="GO" id="GO:0004521">
    <property type="term" value="F:RNA endonuclease activity"/>
    <property type="evidence" value="ECO:0000314"/>
    <property type="project" value="UniProtKB"/>
</dbReference>
<dbReference type="GO" id="GO:0008270">
    <property type="term" value="F:zinc ion binding"/>
    <property type="evidence" value="ECO:0000250"/>
    <property type="project" value="UniProtKB"/>
</dbReference>
<dbReference type="GO" id="GO:0002376">
    <property type="term" value="P:immune system process"/>
    <property type="evidence" value="ECO:0007669"/>
    <property type="project" value="UniProtKB-KW"/>
</dbReference>
<dbReference type="GO" id="GO:0016075">
    <property type="term" value="P:rRNA catabolic process"/>
    <property type="evidence" value="ECO:0000314"/>
    <property type="project" value="UniProtKB"/>
</dbReference>
<dbReference type="GO" id="GO:0016078">
    <property type="term" value="P:tRNA decay"/>
    <property type="evidence" value="ECO:0000314"/>
    <property type="project" value="UniProtKB"/>
</dbReference>
<dbReference type="FunFam" id="3.40.50.300:FF:001322">
    <property type="entry name" value="Schlafen family member 11"/>
    <property type="match status" value="1"/>
</dbReference>
<dbReference type="FunFam" id="3.30.950.30:FF:000003">
    <property type="entry name" value="Schlafen family member 9"/>
    <property type="match status" value="1"/>
</dbReference>
<dbReference type="Gene3D" id="3.40.50.300">
    <property type="entry name" value="P-loop containing nucleotide triphosphate hydrolases"/>
    <property type="match status" value="1"/>
</dbReference>
<dbReference type="Gene3D" id="3.30.950.30">
    <property type="entry name" value="Schlafen, AAA domain"/>
    <property type="match status" value="1"/>
</dbReference>
<dbReference type="InterPro" id="IPR027417">
    <property type="entry name" value="P-loop_NTPase"/>
</dbReference>
<dbReference type="InterPro" id="IPR031450">
    <property type="entry name" value="Poxin-SLFN/SLFN_N"/>
</dbReference>
<dbReference type="InterPro" id="IPR029684">
    <property type="entry name" value="Schlafen"/>
</dbReference>
<dbReference type="InterPro" id="IPR007421">
    <property type="entry name" value="Schlafen_AlbA_2_dom"/>
</dbReference>
<dbReference type="InterPro" id="IPR038461">
    <property type="entry name" value="Schlafen_AlbA_2_dom_sf"/>
</dbReference>
<dbReference type="InterPro" id="IPR018647">
    <property type="entry name" value="SLFN_3-like_DNA/RNA_helicase"/>
</dbReference>
<dbReference type="InterPro" id="IPR048729">
    <property type="entry name" value="SLFN_GTPase-like"/>
</dbReference>
<dbReference type="InterPro" id="IPR027785">
    <property type="entry name" value="UvrD-like_helicase_C"/>
</dbReference>
<dbReference type="PANTHER" id="PTHR12155">
    <property type="entry name" value="SCHLAFEN"/>
    <property type="match status" value="1"/>
</dbReference>
<dbReference type="PANTHER" id="PTHR12155:SF43">
    <property type="entry name" value="SCHLAFEN FAMILY MEMBER 13"/>
    <property type="match status" value="1"/>
</dbReference>
<dbReference type="Pfam" id="PF17057">
    <property type="entry name" value="B3R"/>
    <property type="match status" value="1"/>
</dbReference>
<dbReference type="Pfam" id="PF09848">
    <property type="entry name" value="SLFN-g3_helicase"/>
    <property type="match status" value="1"/>
</dbReference>
<dbReference type="Pfam" id="PF04326">
    <property type="entry name" value="SLFN_AlbA_2"/>
    <property type="match status" value="1"/>
</dbReference>
<dbReference type="Pfam" id="PF21026">
    <property type="entry name" value="SLFN_GTPase-like"/>
    <property type="match status" value="1"/>
</dbReference>
<dbReference type="Pfam" id="PF13538">
    <property type="entry name" value="UvrD_C_2"/>
    <property type="match status" value="1"/>
</dbReference>
<dbReference type="SUPFAM" id="SSF52540">
    <property type="entry name" value="P-loop containing nucleoside triphosphate hydrolases"/>
    <property type="match status" value="1"/>
</dbReference>
<gene>
    <name evidence="7 10" type="primary">Slfn8</name>
</gene>
<accession>B1ARD8</accession>
<accession>A0A0A0MQG0</accession>
<accession>F6RTS1</accession>
<accession>Q3UBN9</accession>
<accession>Q7TMF1</accession>
<name>SLFN8_MOUSE</name>
<protein>
    <recommendedName>
        <fullName evidence="9">Schlafen family member 8</fullName>
        <ecNumber evidence="6">3.1.-.-</ecNumber>
    </recommendedName>
    <alternativeName>
        <fullName evidence="7">Schlafen-8</fullName>
        <shortName evidence="8">mSLFN8</shortName>
    </alternativeName>
</protein>
<comment type="function">
    <text evidence="5 6">Endoribonuclease that cleaves tRNAs and rRNAs (PubMed:29563550). Cleaves tRNAs 11 nucleotides from the 3'-terminus at the acceptor stem (PubMed:29563550). May be involved in immune system via regulation of inflammation (PubMed:29528433).</text>
</comment>
<comment type="cofactor">
    <cofactor evidence="1">
        <name>Mg(2+)</name>
        <dbReference type="ChEBI" id="CHEBI:18420"/>
    </cofactor>
    <text evidence="1">Can also use Mn(2+).</text>
</comment>
<comment type="subcellular location">
    <subcellularLocation>
        <location evidence="2">Cytoplasm</location>
    </subcellularLocation>
</comment>
<comment type="tissue specificity">
    <text evidence="4">In T-cells, expressed at relatively constant levels during development: expressed in immature CD3(-)CD4(-)CD8(-) T-cells (DN stage), in CD4(+)CD8(+) double-positive stage (DP) and mature CD4(+) or CD8(+) thymocytes. Expression is slightly reduced at the DP stage.</text>
</comment>
<comment type="induction">
    <text evidence="4">Induced following infection.</text>
</comment>
<comment type="domain">
    <text evidence="1">Shows a pseudo-dimeric U-pillow-shaped architecture of the SLFN13 N'-domain that may clamp base-paired RNAs.</text>
</comment>
<comment type="disruption phenotype">
    <text evidence="5">No visible phenotype in normal conditions. Mice are resistant in experimental autoimmune encephalomyelitis (EAE) model, a T-cell-mediated autoimmune model. The expression of pro-inflammatory mediators is severely reduced in EAE. No dysfunction of T-cells, or other leukocytes is detected.</text>
</comment>
<comment type="similarity">
    <text evidence="9">Belongs to the Schlafen family. Subgroup III subfamily.</text>
</comment>
<proteinExistence type="evidence at transcript level"/>
<keyword id="KW-0067">ATP-binding</keyword>
<keyword id="KW-0963">Cytoplasm</keyword>
<keyword id="KW-0255">Endonuclease</keyword>
<keyword id="KW-0378">Hydrolase</keyword>
<keyword id="KW-0391">Immunity</keyword>
<keyword id="KW-0460">Magnesium</keyword>
<keyword id="KW-0479">Metal-binding</keyword>
<keyword id="KW-0540">Nuclease</keyword>
<keyword id="KW-0547">Nucleotide-binding</keyword>
<keyword id="KW-1185">Reference proteome</keyword>
<keyword id="KW-0862">Zinc</keyword>
<evidence type="ECO:0000250" key="1">
    <source>
        <dbReference type="UniProtKB" id="Q5U311"/>
    </source>
</evidence>
<evidence type="ECO:0000250" key="2">
    <source>
        <dbReference type="UniProtKB" id="Q68D06"/>
    </source>
</evidence>
<evidence type="ECO:0000255" key="3"/>
<evidence type="ECO:0000269" key="4">
    <source>
    </source>
</evidence>
<evidence type="ECO:0000269" key="5">
    <source>
    </source>
</evidence>
<evidence type="ECO:0000269" key="6">
    <source>
    </source>
</evidence>
<evidence type="ECO:0000303" key="7">
    <source>
    </source>
</evidence>
<evidence type="ECO:0000303" key="8">
    <source>
    </source>
</evidence>
<evidence type="ECO:0000305" key="9"/>
<evidence type="ECO:0000312" key="10">
    <source>
        <dbReference type="MGI" id="MGI:2672859"/>
    </source>
</evidence>